<keyword id="KW-0067">ATP-binding</keyword>
<keyword id="KW-0963">Cytoplasm</keyword>
<keyword id="KW-0436">Ligase</keyword>
<keyword id="KW-0547">Nucleotide-binding</keyword>
<keyword id="KW-0658">Purine biosynthesis</keyword>
<gene>
    <name evidence="1" type="primary">purM</name>
    <name type="ordered locus">GTNG_0245</name>
</gene>
<accession>A4IJX5</accession>
<sequence length="346" mass="37048">MVKAYKQAGVDIEAGYQAVALMKQHVQKTMRPEVLGGIGGFGGLFDLSSLDYRQPVLVSGTDGVGTKLKLAFLLDRHNTIGIDCVAMCVNDIVVQGAEPLFFLDYIACGKAVPEKIAAIVKGVADGCVEAGCALIGGETAEMPGMYAEDEYDLAGFVVGIAEKERLVTGQTIQAGDVLIGLPSSGLHSNGYSLVRRIIFEQAKLSLDEIYEPLDVPLGEELLKPTRIYAKLLRSVLGRFTIKGMAHITGGGFIENIPRMLPQGLGVRIQRGSWPVLPIFDFLRAKGNLEEEEMFSVFNMGIGLVLAVSPETAAPLVQWLDEQNEPAYIIGEVVEGAGVSFTGGNEA</sequence>
<reference key="1">
    <citation type="journal article" date="2007" name="Proc. Natl. Acad. Sci. U.S.A.">
        <title>Genome and proteome of long-chain alkane degrading Geobacillus thermodenitrificans NG80-2 isolated from a deep-subsurface oil reservoir.</title>
        <authorList>
            <person name="Feng L."/>
            <person name="Wang W."/>
            <person name="Cheng J."/>
            <person name="Ren Y."/>
            <person name="Zhao G."/>
            <person name="Gao C."/>
            <person name="Tang Y."/>
            <person name="Liu X."/>
            <person name="Han W."/>
            <person name="Peng X."/>
            <person name="Liu R."/>
            <person name="Wang L."/>
        </authorList>
    </citation>
    <scope>NUCLEOTIDE SEQUENCE [LARGE SCALE GENOMIC DNA]</scope>
    <source>
        <strain>NG80-2</strain>
    </source>
</reference>
<organism>
    <name type="scientific">Geobacillus thermodenitrificans (strain NG80-2)</name>
    <dbReference type="NCBI Taxonomy" id="420246"/>
    <lineage>
        <taxon>Bacteria</taxon>
        <taxon>Bacillati</taxon>
        <taxon>Bacillota</taxon>
        <taxon>Bacilli</taxon>
        <taxon>Bacillales</taxon>
        <taxon>Anoxybacillaceae</taxon>
        <taxon>Geobacillus</taxon>
    </lineage>
</organism>
<proteinExistence type="inferred from homology"/>
<comment type="catalytic activity">
    <reaction evidence="1">
        <text>2-formamido-N(1)-(5-O-phospho-beta-D-ribosyl)acetamidine + ATP = 5-amino-1-(5-phospho-beta-D-ribosyl)imidazole + ADP + phosphate + H(+)</text>
        <dbReference type="Rhea" id="RHEA:23032"/>
        <dbReference type="ChEBI" id="CHEBI:15378"/>
        <dbReference type="ChEBI" id="CHEBI:30616"/>
        <dbReference type="ChEBI" id="CHEBI:43474"/>
        <dbReference type="ChEBI" id="CHEBI:137981"/>
        <dbReference type="ChEBI" id="CHEBI:147287"/>
        <dbReference type="ChEBI" id="CHEBI:456216"/>
        <dbReference type="EC" id="6.3.3.1"/>
    </reaction>
</comment>
<comment type="pathway">
    <text evidence="1">Purine metabolism; IMP biosynthesis via de novo pathway; 5-amino-1-(5-phospho-D-ribosyl)imidazole from N(2)-formyl-N(1)-(5-phospho-D-ribosyl)glycinamide: step 2/2.</text>
</comment>
<comment type="subcellular location">
    <subcellularLocation>
        <location evidence="1">Cytoplasm</location>
    </subcellularLocation>
</comment>
<comment type="similarity">
    <text evidence="1">Belongs to the AIR synthase family.</text>
</comment>
<name>PUR5_GEOTN</name>
<dbReference type="EC" id="6.3.3.1" evidence="1"/>
<dbReference type="EMBL" id="CP000557">
    <property type="protein sequence ID" value="ABO65629.1"/>
    <property type="molecule type" value="Genomic_DNA"/>
</dbReference>
<dbReference type="RefSeq" id="WP_011886685.1">
    <property type="nucleotide sequence ID" value="NC_009328.1"/>
</dbReference>
<dbReference type="SMR" id="A4IJX5"/>
<dbReference type="KEGG" id="gtn:GTNG_0245"/>
<dbReference type="eggNOG" id="COG0150">
    <property type="taxonomic scope" value="Bacteria"/>
</dbReference>
<dbReference type="HOGENOM" id="CLU_047116_0_0_9"/>
<dbReference type="UniPathway" id="UPA00074">
    <property type="reaction ID" value="UER00129"/>
</dbReference>
<dbReference type="Proteomes" id="UP000001578">
    <property type="component" value="Chromosome"/>
</dbReference>
<dbReference type="GO" id="GO:0005829">
    <property type="term" value="C:cytosol"/>
    <property type="evidence" value="ECO:0007669"/>
    <property type="project" value="TreeGrafter"/>
</dbReference>
<dbReference type="GO" id="GO:0005524">
    <property type="term" value="F:ATP binding"/>
    <property type="evidence" value="ECO:0007669"/>
    <property type="project" value="UniProtKB-KW"/>
</dbReference>
<dbReference type="GO" id="GO:0004637">
    <property type="term" value="F:phosphoribosylamine-glycine ligase activity"/>
    <property type="evidence" value="ECO:0007669"/>
    <property type="project" value="TreeGrafter"/>
</dbReference>
<dbReference type="GO" id="GO:0004641">
    <property type="term" value="F:phosphoribosylformylglycinamidine cyclo-ligase activity"/>
    <property type="evidence" value="ECO:0007669"/>
    <property type="project" value="UniProtKB-UniRule"/>
</dbReference>
<dbReference type="GO" id="GO:0006189">
    <property type="term" value="P:'de novo' IMP biosynthetic process"/>
    <property type="evidence" value="ECO:0007669"/>
    <property type="project" value="UniProtKB-UniRule"/>
</dbReference>
<dbReference type="GO" id="GO:0046084">
    <property type="term" value="P:adenine biosynthetic process"/>
    <property type="evidence" value="ECO:0007669"/>
    <property type="project" value="TreeGrafter"/>
</dbReference>
<dbReference type="CDD" id="cd02196">
    <property type="entry name" value="PurM"/>
    <property type="match status" value="1"/>
</dbReference>
<dbReference type="FunFam" id="3.30.1330.10:FF:000001">
    <property type="entry name" value="Phosphoribosylformylglycinamidine cyclo-ligase"/>
    <property type="match status" value="1"/>
</dbReference>
<dbReference type="FunFam" id="3.90.650.10:FF:000001">
    <property type="entry name" value="Phosphoribosylformylglycinamidine cyclo-ligase"/>
    <property type="match status" value="1"/>
</dbReference>
<dbReference type="Gene3D" id="3.90.650.10">
    <property type="entry name" value="PurM-like C-terminal domain"/>
    <property type="match status" value="1"/>
</dbReference>
<dbReference type="Gene3D" id="3.30.1330.10">
    <property type="entry name" value="PurM-like, N-terminal domain"/>
    <property type="match status" value="1"/>
</dbReference>
<dbReference type="HAMAP" id="MF_00741">
    <property type="entry name" value="AIRS"/>
    <property type="match status" value="1"/>
</dbReference>
<dbReference type="InterPro" id="IPR010918">
    <property type="entry name" value="PurM-like_C_dom"/>
</dbReference>
<dbReference type="InterPro" id="IPR036676">
    <property type="entry name" value="PurM-like_C_sf"/>
</dbReference>
<dbReference type="InterPro" id="IPR016188">
    <property type="entry name" value="PurM-like_N"/>
</dbReference>
<dbReference type="InterPro" id="IPR036921">
    <property type="entry name" value="PurM-like_N_sf"/>
</dbReference>
<dbReference type="InterPro" id="IPR004733">
    <property type="entry name" value="PurM_cligase"/>
</dbReference>
<dbReference type="NCBIfam" id="TIGR00878">
    <property type="entry name" value="purM"/>
    <property type="match status" value="1"/>
</dbReference>
<dbReference type="PANTHER" id="PTHR10520:SF12">
    <property type="entry name" value="TRIFUNCTIONAL PURINE BIOSYNTHETIC PROTEIN ADENOSINE-3"/>
    <property type="match status" value="1"/>
</dbReference>
<dbReference type="PANTHER" id="PTHR10520">
    <property type="entry name" value="TRIFUNCTIONAL PURINE BIOSYNTHETIC PROTEIN ADENOSINE-3-RELATED"/>
    <property type="match status" value="1"/>
</dbReference>
<dbReference type="Pfam" id="PF00586">
    <property type="entry name" value="AIRS"/>
    <property type="match status" value="1"/>
</dbReference>
<dbReference type="Pfam" id="PF02769">
    <property type="entry name" value="AIRS_C"/>
    <property type="match status" value="1"/>
</dbReference>
<dbReference type="SUPFAM" id="SSF56042">
    <property type="entry name" value="PurM C-terminal domain-like"/>
    <property type="match status" value="1"/>
</dbReference>
<dbReference type="SUPFAM" id="SSF55326">
    <property type="entry name" value="PurM N-terminal domain-like"/>
    <property type="match status" value="1"/>
</dbReference>
<protein>
    <recommendedName>
        <fullName evidence="1">Phosphoribosylformylglycinamidine cyclo-ligase</fullName>
        <ecNumber evidence="1">6.3.3.1</ecNumber>
    </recommendedName>
    <alternativeName>
        <fullName evidence="1">AIR synthase</fullName>
    </alternativeName>
    <alternativeName>
        <fullName evidence="1">AIRS</fullName>
    </alternativeName>
    <alternativeName>
        <fullName evidence="1">Phosphoribosyl-aminoimidazole synthetase</fullName>
    </alternativeName>
</protein>
<feature type="chain" id="PRO_1000046437" description="Phosphoribosylformylglycinamidine cyclo-ligase">
    <location>
        <begin position="1"/>
        <end position="346"/>
    </location>
</feature>
<evidence type="ECO:0000255" key="1">
    <source>
        <dbReference type="HAMAP-Rule" id="MF_00741"/>
    </source>
</evidence>